<organism>
    <name type="scientific">Trichlorobacter lovleyi (strain ATCC BAA-1151 / DSM 17278 / SZ)</name>
    <name type="common">Geobacter lovleyi</name>
    <dbReference type="NCBI Taxonomy" id="398767"/>
    <lineage>
        <taxon>Bacteria</taxon>
        <taxon>Pseudomonadati</taxon>
        <taxon>Thermodesulfobacteriota</taxon>
        <taxon>Desulfuromonadia</taxon>
        <taxon>Geobacterales</taxon>
        <taxon>Geobacteraceae</taxon>
        <taxon>Trichlorobacter</taxon>
    </lineage>
</organism>
<keyword id="KW-0975">Bacterial flagellum</keyword>
<keyword id="KW-0998">Cell outer membrane</keyword>
<keyword id="KW-0449">Lipoprotein</keyword>
<keyword id="KW-0472">Membrane</keyword>
<keyword id="KW-0564">Palmitate</keyword>
<keyword id="KW-1185">Reference proteome</keyword>
<keyword id="KW-0732">Signal</keyword>
<sequence>MKWYLVALSGLLLSGCVVQQTEVVSPSFDQQLKSPAPNYSNGSIWQASSIGLTEDGKARRVGDIVTIIVTETASASKQAATATGRSSQISAGIPNMLGLEESKIITSNFADLSKLLNASASSKFDGSGSTSRKETLSATISAKVIDVLPNSNLKIEGRRNVRVNNEDQIVTVKGTIRQRDITAENTINSIYVADAQISYAGEGIISDRQKPGWLMNVLDKLWPF</sequence>
<proteinExistence type="inferred from homology"/>
<name>FLGH_TRIL1</name>
<evidence type="ECO:0000255" key="1">
    <source>
        <dbReference type="HAMAP-Rule" id="MF_00415"/>
    </source>
</evidence>
<gene>
    <name evidence="1" type="primary">flgH</name>
    <name type="ordered locus">Glov_3279</name>
</gene>
<protein>
    <recommendedName>
        <fullName evidence="1">Flagellar L-ring protein</fullName>
    </recommendedName>
    <alternativeName>
        <fullName evidence="1">Basal body L-ring protein</fullName>
    </alternativeName>
</protein>
<accession>B3EAV2</accession>
<feature type="signal peptide" evidence="1">
    <location>
        <begin position="1"/>
        <end position="15"/>
    </location>
</feature>
<feature type="chain" id="PRO_1000123951" description="Flagellar L-ring protein">
    <location>
        <begin position="16"/>
        <end position="224"/>
    </location>
</feature>
<feature type="lipid moiety-binding region" description="N-palmitoyl cysteine" evidence="1">
    <location>
        <position position="16"/>
    </location>
</feature>
<feature type="lipid moiety-binding region" description="S-diacylglycerol cysteine" evidence="1">
    <location>
        <position position="16"/>
    </location>
</feature>
<comment type="function">
    <text evidence="1">Assembles around the rod to form the L-ring and probably protects the motor/basal body from shearing forces during rotation.</text>
</comment>
<comment type="subunit">
    <text evidence="1">The basal body constitutes a major portion of the flagellar organelle and consists of four rings (L,P,S, and M) mounted on a central rod.</text>
</comment>
<comment type="subcellular location">
    <subcellularLocation>
        <location evidence="1">Cell outer membrane</location>
        <topology evidence="1">Lipid-anchor</topology>
    </subcellularLocation>
    <subcellularLocation>
        <location evidence="1">Bacterial flagellum basal body</location>
    </subcellularLocation>
</comment>
<comment type="similarity">
    <text evidence="1">Belongs to the FlgH family.</text>
</comment>
<dbReference type="EMBL" id="CP001089">
    <property type="protein sequence ID" value="ACD96985.1"/>
    <property type="molecule type" value="Genomic_DNA"/>
</dbReference>
<dbReference type="RefSeq" id="WP_012471309.1">
    <property type="nucleotide sequence ID" value="NC_010814.1"/>
</dbReference>
<dbReference type="SMR" id="B3EAV2"/>
<dbReference type="STRING" id="398767.Glov_3279"/>
<dbReference type="KEGG" id="glo:Glov_3279"/>
<dbReference type="eggNOG" id="COG2063">
    <property type="taxonomic scope" value="Bacteria"/>
</dbReference>
<dbReference type="HOGENOM" id="CLU_069313_0_2_7"/>
<dbReference type="OrthoDB" id="9789227at2"/>
<dbReference type="Proteomes" id="UP000002420">
    <property type="component" value="Chromosome"/>
</dbReference>
<dbReference type="GO" id="GO:0009427">
    <property type="term" value="C:bacterial-type flagellum basal body, distal rod, L ring"/>
    <property type="evidence" value="ECO:0007669"/>
    <property type="project" value="InterPro"/>
</dbReference>
<dbReference type="GO" id="GO:0009279">
    <property type="term" value="C:cell outer membrane"/>
    <property type="evidence" value="ECO:0007669"/>
    <property type="project" value="UniProtKB-SubCell"/>
</dbReference>
<dbReference type="GO" id="GO:0003774">
    <property type="term" value="F:cytoskeletal motor activity"/>
    <property type="evidence" value="ECO:0007669"/>
    <property type="project" value="InterPro"/>
</dbReference>
<dbReference type="GO" id="GO:0071973">
    <property type="term" value="P:bacterial-type flagellum-dependent cell motility"/>
    <property type="evidence" value="ECO:0007669"/>
    <property type="project" value="InterPro"/>
</dbReference>
<dbReference type="HAMAP" id="MF_00415">
    <property type="entry name" value="FlgH"/>
    <property type="match status" value="1"/>
</dbReference>
<dbReference type="InterPro" id="IPR000527">
    <property type="entry name" value="Flag_Lring"/>
</dbReference>
<dbReference type="PANTHER" id="PTHR34933">
    <property type="entry name" value="FLAGELLAR L-RING PROTEIN"/>
    <property type="match status" value="1"/>
</dbReference>
<dbReference type="PANTHER" id="PTHR34933:SF1">
    <property type="entry name" value="FLAGELLAR L-RING PROTEIN"/>
    <property type="match status" value="1"/>
</dbReference>
<dbReference type="Pfam" id="PF02107">
    <property type="entry name" value="FlgH"/>
    <property type="match status" value="1"/>
</dbReference>
<dbReference type="PRINTS" id="PR01008">
    <property type="entry name" value="FLGLRINGFLGH"/>
</dbReference>
<dbReference type="PROSITE" id="PS51257">
    <property type="entry name" value="PROKAR_LIPOPROTEIN"/>
    <property type="match status" value="1"/>
</dbReference>
<reference key="1">
    <citation type="submission" date="2008-05" db="EMBL/GenBank/DDBJ databases">
        <title>Complete sequence of chromosome of Geobacter lovleyi SZ.</title>
        <authorList>
            <consortium name="US DOE Joint Genome Institute"/>
            <person name="Lucas S."/>
            <person name="Copeland A."/>
            <person name="Lapidus A."/>
            <person name="Glavina del Rio T."/>
            <person name="Dalin E."/>
            <person name="Tice H."/>
            <person name="Bruce D."/>
            <person name="Goodwin L."/>
            <person name="Pitluck S."/>
            <person name="Chertkov O."/>
            <person name="Meincke L."/>
            <person name="Brettin T."/>
            <person name="Detter J.C."/>
            <person name="Han C."/>
            <person name="Tapia R."/>
            <person name="Kuske C.R."/>
            <person name="Schmutz J."/>
            <person name="Larimer F."/>
            <person name="Land M."/>
            <person name="Hauser L."/>
            <person name="Kyrpides N."/>
            <person name="Mikhailova N."/>
            <person name="Sung Y."/>
            <person name="Fletcher K.E."/>
            <person name="Ritalahti K.M."/>
            <person name="Loeffler F.E."/>
            <person name="Richardson P."/>
        </authorList>
    </citation>
    <scope>NUCLEOTIDE SEQUENCE [LARGE SCALE GENOMIC DNA]</scope>
    <source>
        <strain>ATCC BAA-1151 / DSM 17278 / SZ</strain>
    </source>
</reference>